<sequence length="226" mass="26178">MPRPRKRQTGTAGPDRKKLSGKRTKTENSESTSVKLENSSLEMTTTFKNGGKNLSNYWLMKSEPESRLEKGIDMKFSIEDLKAQPKQTACWDGVRNYQARNFLRAMKLEDEAFFYHSNCKQPGIVGLMKIVKEAYPDHTQFEKSNPHYDPSSKEDDPKWSMVDVQFVRMMKRFIPLEELKTYHQAHKATGGPLKSMTLFTRQRLSVQPLTQEEFDFILSLEETEPS</sequence>
<dbReference type="EMBL" id="AB080370">
    <property type="protein sequence ID" value="BAC21100.1"/>
    <property type="molecule type" value="mRNA"/>
</dbReference>
<dbReference type="EMBL" id="BC016594">
    <property type="protein sequence ID" value="AAH16594.1"/>
    <property type="molecule type" value="mRNA"/>
</dbReference>
<dbReference type="CCDS" id="CCDS22937.1"/>
<dbReference type="RefSeq" id="NP_653126.1">
    <property type="nucleotide sequence ID" value="NM_144543.2"/>
</dbReference>
<dbReference type="SMR" id="Q91YJ3"/>
<dbReference type="BioGRID" id="218981">
    <property type="interactions" value="2"/>
</dbReference>
<dbReference type="FunCoup" id="Q91YJ3">
    <property type="interactions" value="2231"/>
</dbReference>
<dbReference type="STRING" id="10090.ENSMUSP00000150823"/>
<dbReference type="iPTMnet" id="Q91YJ3"/>
<dbReference type="PhosphoSitePlus" id="Q91YJ3"/>
<dbReference type="SwissPalm" id="Q91YJ3"/>
<dbReference type="PaxDb" id="10090-ENSMUSP00000037614"/>
<dbReference type="PeptideAtlas" id="Q91YJ3"/>
<dbReference type="ProteomicsDB" id="259187"/>
<dbReference type="Pumba" id="Q91YJ3"/>
<dbReference type="Antibodypedia" id="33170">
    <property type="antibodies" value="157 antibodies from 25 providers"/>
</dbReference>
<dbReference type="DNASU" id="77862"/>
<dbReference type="Ensembl" id="ENSMUST00000039161.10">
    <property type="protein sequence ID" value="ENSMUSP00000037614.9"/>
    <property type="gene ID" value="ENSMUSG00000035443.11"/>
</dbReference>
<dbReference type="Ensembl" id="ENSMUST00000213683.2">
    <property type="protein sequence ID" value="ENSMUSP00000150823.2"/>
    <property type="gene ID" value="ENSMUSG00000035443.11"/>
</dbReference>
<dbReference type="GeneID" id="77862"/>
<dbReference type="KEGG" id="mmu:77862"/>
<dbReference type="UCSC" id="uc009oqb.2">
    <property type="organism name" value="mouse"/>
</dbReference>
<dbReference type="AGR" id="MGI:1925112"/>
<dbReference type="CTD" id="29087"/>
<dbReference type="MGI" id="MGI:1925112">
    <property type="gene designation" value="Thyn1"/>
</dbReference>
<dbReference type="VEuPathDB" id="HostDB:ENSMUSG00000035443"/>
<dbReference type="eggNOG" id="KOG3383">
    <property type="taxonomic scope" value="Eukaryota"/>
</dbReference>
<dbReference type="GeneTree" id="ENSGT00390000013297"/>
<dbReference type="HOGENOM" id="CLU_041799_2_0_1"/>
<dbReference type="InParanoid" id="Q91YJ3"/>
<dbReference type="OMA" id="DVQFIRM"/>
<dbReference type="OrthoDB" id="41445at2759"/>
<dbReference type="PhylomeDB" id="Q91YJ3"/>
<dbReference type="TreeFam" id="TF332126"/>
<dbReference type="BioGRID-ORCS" id="77862">
    <property type="hits" value="1 hit in 77 CRISPR screens"/>
</dbReference>
<dbReference type="ChiTaRS" id="Thyn1">
    <property type="organism name" value="mouse"/>
</dbReference>
<dbReference type="PRO" id="PR:Q91YJ3"/>
<dbReference type="Proteomes" id="UP000000589">
    <property type="component" value="Chromosome 9"/>
</dbReference>
<dbReference type="RNAct" id="Q91YJ3">
    <property type="molecule type" value="protein"/>
</dbReference>
<dbReference type="Bgee" id="ENSMUSG00000035443">
    <property type="expression patterns" value="Expressed in floor plate of midbrain and 254 other cell types or tissues"/>
</dbReference>
<dbReference type="ExpressionAtlas" id="Q91YJ3">
    <property type="expression patterns" value="baseline and differential"/>
</dbReference>
<dbReference type="GO" id="GO:0005634">
    <property type="term" value="C:nucleus"/>
    <property type="evidence" value="ECO:0000314"/>
    <property type="project" value="HGNC-UCL"/>
</dbReference>
<dbReference type="CDD" id="cd21133">
    <property type="entry name" value="EVE"/>
    <property type="match status" value="1"/>
</dbReference>
<dbReference type="FunFam" id="3.10.590.10:FF:000003">
    <property type="entry name" value="Thymocyte nuclear protein 1"/>
    <property type="match status" value="1"/>
</dbReference>
<dbReference type="Gene3D" id="3.10.590.10">
    <property type="entry name" value="ph1033 like domains"/>
    <property type="match status" value="1"/>
</dbReference>
<dbReference type="InterPro" id="IPR052181">
    <property type="entry name" value="5hmC_binding"/>
</dbReference>
<dbReference type="InterPro" id="IPR002740">
    <property type="entry name" value="EVE_domain"/>
</dbReference>
<dbReference type="InterPro" id="IPR015947">
    <property type="entry name" value="PUA-like_sf"/>
</dbReference>
<dbReference type="InterPro" id="IPR047197">
    <property type="entry name" value="THYN1-like_EVE"/>
</dbReference>
<dbReference type="PANTHER" id="PTHR14087">
    <property type="entry name" value="THYMOCYTE NUCLEAR PROTEIN 1"/>
    <property type="match status" value="1"/>
</dbReference>
<dbReference type="PANTHER" id="PTHR14087:SF7">
    <property type="entry name" value="THYMOCYTE NUCLEAR PROTEIN 1"/>
    <property type="match status" value="1"/>
</dbReference>
<dbReference type="Pfam" id="PF01878">
    <property type="entry name" value="EVE"/>
    <property type="match status" value="1"/>
</dbReference>
<dbReference type="SUPFAM" id="SSF88697">
    <property type="entry name" value="PUA domain-like"/>
    <property type="match status" value="1"/>
</dbReference>
<organism>
    <name type="scientific">Mus musculus</name>
    <name type="common">Mouse</name>
    <dbReference type="NCBI Taxonomy" id="10090"/>
    <lineage>
        <taxon>Eukaryota</taxon>
        <taxon>Metazoa</taxon>
        <taxon>Chordata</taxon>
        <taxon>Craniata</taxon>
        <taxon>Vertebrata</taxon>
        <taxon>Euteleostomi</taxon>
        <taxon>Mammalia</taxon>
        <taxon>Eutheria</taxon>
        <taxon>Euarchontoglires</taxon>
        <taxon>Glires</taxon>
        <taxon>Rodentia</taxon>
        <taxon>Myomorpha</taxon>
        <taxon>Muroidea</taxon>
        <taxon>Muridae</taxon>
        <taxon>Murinae</taxon>
        <taxon>Mus</taxon>
        <taxon>Mus</taxon>
    </lineage>
</organism>
<keyword id="KW-0539">Nucleus</keyword>
<keyword id="KW-0597">Phosphoprotein</keyword>
<keyword id="KW-1185">Reference proteome</keyword>
<accession>Q91YJ3</accession>
<proteinExistence type="evidence at protein level"/>
<name>THYN1_MOUSE</name>
<gene>
    <name type="primary">Thyn1</name>
    <name type="synonym">Thy28</name>
</gene>
<evidence type="ECO:0000250" key="1"/>
<evidence type="ECO:0000256" key="2">
    <source>
        <dbReference type="SAM" id="MobiDB-lite"/>
    </source>
</evidence>
<evidence type="ECO:0000269" key="3">
    <source>
    </source>
</evidence>
<evidence type="ECO:0000269" key="4">
    <source>
    </source>
</evidence>
<evidence type="ECO:0000269" key="5">
    <source>
    </source>
</evidence>
<evidence type="ECO:0000269" key="6">
    <source>
    </source>
</evidence>
<reference key="1">
    <citation type="journal article" date="2002" name="Gene">
        <title>Molecular cloning and characterization of the mouse thymocyte protein gene.</title>
        <authorList>
            <person name="Miyaji H."/>
            <person name="Yoshimoto T."/>
            <person name="Asakura H."/>
            <person name="Komachi A."/>
            <person name="Kamiya S."/>
            <person name="Takasaki M."/>
            <person name="Mizuguchi J."/>
        </authorList>
    </citation>
    <scope>NUCLEOTIDE SEQUENCE [MRNA]</scope>
    <scope>TISSUE SPECIFICITY</scope>
</reference>
<reference key="2">
    <citation type="journal article" date="2004" name="Genome Res.">
        <title>The status, quality, and expansion of the NIH full-length cDNA project: the Mammalian Gene Collection (MGC).</title>
        <authorList>
            <consortium name="The MGC Project Team"/>
        </authorList>
    </citation>
    <scope>NUCLEOTIDE SEQUENCE [LARGE SCALE MRNA]</scope>
    <source>
        <strain>FVB/N</strain>
        <tissue>Mammary tumor</tissue>
    </source>
</reference>
<reference key="3">
    <citation type="journal article" date="2003" name="Apoptosis">
        <title>Anti-IgM-induced down-regulation of nuclear Thy28 protein expression in Ramos B lymphoma cells.</title>
        <authorList>
            <person name="Jiang X.Z."/>
            <person name="Toyota H."/>
            <person name="Yoshimoto T."/>
            <person name="Takada E."/>
            <person name="Asakura H."/>
            <person name="Mizuguchi J."/>
        </authorList>
    </citation>
    <scope>INDUCTION</scope>
    <scope>SUBCELLULAR LOCATION</scope>
    <scope>TISSUE SPECIFICITY</scope>
</reference>
<reference key="4">
    <citation type="journal article" date="2003" name="Tissue Cell">
        <title>Modulation of mThy28 nuclear protein expression during thymocyte development.</title>
        <authorList>
            <person name="Jiang X.Z."/>
            <person name="Toyota H."/>
            <person name="Takada E."/>
            <person name="Yoshimoto T."/>
            <person name="Kitamura T."/>
            <person name="Yamada J."/>
            <person name="Mizuguchi J."/>
        </authorList>
    </citation>
    <scope>INDUCTION</scope>
    <scope>SUBCELLULAR LOCATION</scope>
    <scope>TISSUE SPECIFICITY</scope>
</reference>
<reference key="5">
    <citation type="journal article" date="2010" name="Cell">
        <title>A tissue-specific atlas of mouse protein phosphorylation and expression.</title>
        <authorList>
            <person name="Huttlin E.L."/>
            <person name="Jedrychowski M.P."/>
            <person name="Elias J.E."/>
            <person name="Goswami T."/>
            <person name="Rad R."/>
            <person name="Beausoleil S.A."/>
            <person name="Villen J."/>
            <person name="Haas W."/>
            <person name="Sowa M.E."/>
            <person name="Gygi S.P."/>
        </authorList>
    </citation>
    <scope>IDENTIFICATION BY MASS SPECTROMETRY [LARGE SCALE ANALYSIS]</scope>
    <source>
        <tissue>Testis</tissue>
    </source>
</reference>
<reference key="6">
    <citation type="journal article" date="2013" name="Cell">
        <title>Dynamic readers for 5-(hydroxy)methylcytosine and its oxidized derivatives.</title>
        <authorList>
            <person name="Spruijt C.G."/>
            <person name="Gnerlich F."/>
            <person name="Smits A.H."/>
            <person name="Pfaffeneder T."/>
            <person name="Jansen P.W."/>
            <person name="Bauer C."/>
            <person name="Munzel M."/>
            <person name="Wagner M."/>
            <person name="Muller M."/>
            <person name="Khan F."/>
            <person name="Eberl H.C."/>
            <person name="Mensinga A."/>
            <person name="Brinkman A.B."/>
            <person name="Lephikov K."/>
            <person name="Muller U."/>
            <person name="Walter J."/>
            <person name="Boelens R."/>
            <person name="van Ingen H."/>
            <person name="Leonhardt H."/>
            <person name="Carell T."/>
            <person name="Vermeulen M."/>
        </authorList>
    </citation>
    <scope>FUNCTION</scope>
</reference>
<comment type="function">
    <text evidence="6">Specifically binds 5-hydroxymethylcytosine (5hmC), suggesting that it acts as a specific reader of 5hmC.</text>
</comment>
<comment type="subcellular location">
    <subcellularLocation>
        <location evidence="4 5">Nucleus</location>
    </subcellularLocation>
</comment>
<comment type="tissue specificity">
    <text evidence="3 4 5">Expressed in the medulla containing mature thymocytes, but not the cortex having immature thymocytes (at protein level). Abundant expression seen in testis, liver, brain and kidney with lower levels of the expression in thymus, spleen, heart and stomach.</text>
</comment>
<comment type="induction">
    <text evidence="4 5">Down-regulated upon induction of apoptosis.</text>
</comment>
<comment type="PTM">
    <text evidence="1">Phosphorylated.</text>
</comment>
<feature type="chain" id="PRO_0000262565" description="Thymocyte nuclear protein 1">
    <location>
        <begin position="1"/>
        <end position="226"/>
    </location>
</feature>
<feature type="region of interest" description="Disordered" evidence="2">
    <location>
        <begin position="1"/>
        <end position="38"/>
    </location>
</feature>
<feature type="short sequence motif" description="Nuclear localization signal" evidence="1">
    <location>
        <begin position="5"/>
        <end position="10"/>
    </location>
</feature>
<feature type="compositionally biased region" description="Basic and acidic residues" evidence="2">
    <location>
        <begin position="14"/>
        <end position="28"/>
    </location>
</feature>
<feature type="compositionally biased region" description="Polar residues" evidence="2">
    <location>
        <begin position="29"/>
        <end position="38"/>
    </location>
</feature>
<protein>
    <recommendedName>
        <fullName>Thymocyte nuclear protein 1</fullName>
    </recommendedName>
    <alternativeName>
        <fullName>Thymocyte protein Thy28</fullName>
        <shortName>mThy28</shortName>
    </alternativeName>
</protein>